<keyword id="KW-0145">Chemotaxis</keyword>
<keyword id="KW-0202">Cytokine</keyword>
<keyword id="KW-1015">Disulfide bond</keyword>
<keyword id="KW-0395">Inflammatory response</keyword>
<keyword id="KW-0964">Secreted</keyword>
<keyword id="KW-0732">Signal</keyword>
<dbReference type="EMBL" id="AF421391">
    <property type="protein sequence ID" value="AAL16932.1"/>
    <property type="molecule type" value="mRNA"/>
</dbReference>
<dbReference type="SMR" id="Q91ZL1"/>
<dbReference type="OrthoDB" id="8900217at2759"/>
<dbReference type="GO" id="GO:0005615">
    <property type="term" value="C:extracellular space"/>
    <property type="evidence" value="ECO:0007669"/>
    <property type="project" value="UniProtKB-KW"/>
</dbReference>
<dbReference type="GO" id="GO:0048020">
    <property type="term" value="F:CCR chemokine receptor binding"/>
    <property type="evidence" value="ECO:0007669"/>
    <property type="project" value="TreeGrafter"/>
</dbReference>
<dbReference type="GO" id="GO:0008009">
    <property type="term" value="F:chemokine activity"/>
    <property type="evidence" value="ECO:0007669"/>
    <property type="project" value="InterPro"/>
</dbReference>
<dbReference type="GO" id="GO:0061844">
    <property type="term" value="P:antimicrobial humoral immune response mediated by antimicrobial peptide"/>
    <property type="evidence" value="ECO:0007669"/>
    <property type="project" value="TreeGrafter"/>
</dbReference>
<dbReference type="GO" id="GO:0070098">
    <property type="term" value="P:chemokine-mediated signaling pathway"/>
    <property type="evidence" value="ECO:0000250"/>
    <property type="project" value="UniProtKB"/>
</dbReference>
<dbReference type="GO" id="GO:0048245">
    <property type="term" value="P:eosinophil chemotaxis"/>
    <property type="evidence" value="ECO:0007669"/>
    <property type="project" value="TreeGrafter"/>
</dbReference>
<dbReference type="GO" id="GO:0007186">
    <property type="term" value="P:G protein-coupled receptor signaling pathway"/>
    <property type="evidence" value="ECO:0000250"/>
    <property type="project" value="UniProtKB"/>
</dbReference>
<dbReference type="GO" id="GO:0006954">
    <property type="term" value="P:inflammatory response"/>
    <property type="evidence" value="ECO:0007669"/>
    <property type="project" value="UniProtKB-KW"/>
</dbReference>
<dbReference type="GO" id="GO:0030335">
    <property type="term" value="P:positive regulation of cell migration"/>
    <property type="evidence" value="ECO:0007669"/>
    <property type="project" value="TreeGrafter"/>
</dbReference>
<dbReference type="GO" id="GO:0050796">
    <property type="term" value="P:regulation of insulin secretion"/>
    <property type="evidence" value="ECO:0000250"/>
    <property type="project" value="UniProtKB"/>
</dbReference>
<dbReference type="CDD" id="cd00272">
    <property type="entry name" value="Chemokine_CC"/>
    <property type="match status" value="1"/>
</dbReference>
<dbReference type="FunFam" id="2.40.50.40:FF:000002">
    <property type="entry name" value="C-C motif chemokine"/>
    <property type="match status" value="1"/>
</dbReference>
<dbReference type="Gene3D" id="2.40.50.40">
    <property type="match status" value="1"/>
</dbReference>
<dbReference type="InterPro" id="IPR039809">
    <property type="entry name" value="Chemokine_b/g/d"/>
</dbReference>
<dbReference type="InterPro" id="IPR000827">
    <property type="entry name" value="Chemokine_CC_CS"/>
</dbReference>
<dbReference type="InterPro" id="IPR001811">
    <property type="entry name" value="Chemokine_IL8-like_dom"/>
</dbReference>
<dbReference type="InterPro" id="IPR036048">
    <property type="entry name" value="Interleukin_8-like_sf"/>
</dbReference>
<dbReference type="PANTHER" id="PTHR12015:SF170">
    <property type="entry name" value="C-C MOTIF CHEMOKINE 5"/>
    <property type="match status" value="1"/>
</dbReference>
<dbReference type="PANTHER" id="PTHR12015">
    <property type="entry name" value="SMALL INDUCIBLE CYTOKINE A"/>
    <property type="match status" value="1"/>
</dbReference>
<dbReference type="Pfam" id="PF00048">
    <property type="entry name" value="IL8"/>
    <property type="match status" value="1"/>
</dbReference>
<dbReference type="SMART" id="SM00199">
    <property type="entry name" value="SCY"/>
    <property type="match status" value="1"/>
</dbReference>
<dbReference type="SUPFAM" id="SSF54117">
    <property type="entry name" value="Interleukin 8-like chemokines"/>
    <property type="match status" value="1"/>
</dbReference>
<dbReference type="PROSITE" id="PS00472">
    <property type="entry name" value="SMALL_CYTOKINES_CC"/>
    <property type="match status" value="1"/>
</dbReference>
<name>CCL5_SIGHI</name>
<proteinExistence type="inferred from homology"/>
<feature type="signal peptide" evidence="3">
    <location>
        <begin position="1"/>
        <end position="23"/>
    </location>
</feature>
<feature type="chain" id="PRO_0000005181" description="C-C motif chemokine 5">
    <location>
        <begin position="24"/>
        <end position="91"/>
    </location>
</feature>
<feature type="disulfide bond" evidence="1">
    <location>
        <begin position="33"/>
        <end position="57"/>
    </location>
</feature>
<feature type="disulfide bond" evidence="1">
    <location>
        <begin position="34"/>
        <end position="73"/>
    </location>
</feature>
<accession>Q91ZL1</accession>
<organism>
    <name type="scientific">Sigmodon hispidus</name>
    <name type="common">Hispid cotton rat</name>
    <dbReference type="NCBI Taxonomy" id="42415"/>
    <lineage>
        <taxon>Eukaryota</taxon>
        <taxon>Metazoa</taxon>
        <taxon>Chordata</taxon>
        <taxon>Craniata</taxon>
        <taxon>Vertebrata</taxon>
        <taxon>Euteleostomi</taxon>
        <taxon>Mammalia</taxon>
        <taxon>Eutheria</taxon>
        <taxon>Euarchontoglires</taxon>
        <taxon>Glires</taxon>
        <taxon>Rodentia</taxon>
        <taxon>Myomorpha</taxon>
        <taxon>Muroidea</taxon>
        <taxon>Cricetidae</taxon>
        <taxon>Sigmodontinae</taxon>
        <taxon>Sigmodon</taxon>
    </lineage>
</organism>
<reference key="1">
    <citation type="journal article" date="2002" name="J. Infect. Dis.">
        <title>Cytokine and chemokine gene expression after primary and secondary respiratory syncytial virus infection in cotton rats.</title>
        <authorList>
            <person name="Blanco J.C."/>
            <person name="Richardson J.Y."/>
            <person name="Darnell M.E."/>
            <person name="Rowzee A."/>
            <person name="Pletneva L.M."/>
            <person name="Porter D.D."/>
            <person name="Prince G.A."/>
        </authorList>
    </citation>
    <scope>NUCLEOTIDE SEQUENCE [MRNA]</scope>
</reference>
<gene>
    <name type="primary">CCL5</name>
    <name type="synonym">SCYA5</name>
</gene>
<comment type="function">
    <text evidence="2">Chemoattractant for blood monocytes, memory T-helper cells and eosinophils. Causes the release of histamine from basophils and activates eosinophils. May activate several chemokine receptors including CCR1, CCR3, CCR4 and CCR5. May also be an agonist of the G protein-coupled receptor GPR75. Together with GPR75, may play a role in neuron survival through activation of a downstream signaling pathway involving the PI3, Akt and MAP kinases. By activating GPR75 may also play a role in insulin secretion by islet cells.</text>
</comment>
<comment type="subcellular location">
    <subcellularLocation>
        <location>Secreted</location>
    </subcellularLocation>
</comment>
<comment type="similarity">
    <text evidence="4">Belongs to the intercrine beta (chemokine CC) family.</text>
</comment>
<sequence>MKISAAVLTVVLMAASLCAPASASPNGSDTIPCCFAYLSAVLPRAHVKEYFYTSSKCSNFAVVFVTRRNRQVCANPKKKWVQEYINYLELK</sequence>
<protein>
    <recommendedName>
        <fullName>C-C motif chemokine 5</fullName>
    </recommendedName>
    <alternativeName>
        <fullName>Small-inducible cytokine A5</fullName>
    </alternativeName>
    <alternativeName>
        <fullName>T-cell-specific protein RANTES</fullName>
    </alternativeName>
</protein>
<evidence type="ECO:0000250" key="1"/>
<evidence type="ECO:0000250" key="2">
    <source>
        <dbReference type="UniProtKB" id="P13501"/>
    </source>
</evidence>
<evidence type="ECO:0000255" key="3"/>
<evidence type="ECO:0000305" key="4"/>